<sequence length="289" mass="32100">MSWLEKLLDKNNIINTRKTSIPEGVWTKCPSCEQVLYRIALKENLEVCPKCNHHMRMTARDRLDSFLDKEKQSEIACEYEPKDVLNFKDKKRYKERIALAQKSTGEKDALVAMKGELLGLPIVACAFEFSFMAGSMGSVVGAKFVEAVDIAIEENRGLVCFSACGGARMQESLMALMQMAKTSAALDHLSRVGLPYISVLTDQTFGGVSASIAMMGDINIGEPEARIGFAGRRVIEQTVREKLPDGFQQSEFLLEHGALDMIVERSDMRRKIGGLIAKLTNKSIQPEAE</sequence>
<reference key="1">
    <citation type="submission" date="2007-08" db="EMBL/GenBank/DDBJ databases">
        <authorList>
            <consortium name="The Vibrio harveyi Genome Sequencing Project"/>
            <person name="Bassler B."/>
            <person name="Clifton S.W."/>
            <person name="Fulton L."/>
            <person name="Delehaunty K."/>
            <person name="Fronick C."/>
            <person name="Harrison M."/>
            <person name="Markivic C."/>
            <person name="Fulton R."/>
            <person name="Tin-Wollam A.-M."/>
            <person name="Shah N."/>
            <person name="Pepin K."/>
            <person name="Nash W."/>
            <person name="Thiruvilangam P."/>
            <person name="Bhonagiri V."/>
            <person name="Waters C."/>
            <person name="Tu K.C."/>
            <person name="Irgon J."/>
            <person name="Wilson R.K."/>
        </authorList>
    </citation>
    <scope>NUCLEOTIDE SEQUENCE [LARGE SCALE GENOMIC DNA]</scope>
    <source>
        <strain>ATCC BAA-1116 / BB120</strain>
    </source>
</reference>
<evidence type="ECO:0000255" key="1">
    <source>
        <dbReference type="HAMAP-Rule" id="MF_01395"/>
    </source>
</evidence>
<evidence type="ECO:0000255" key="2">
    <source>
        <dbReference type="PROSITE-ProRule" id="PRU01136"/>
    </source>
</evidence>
<accession>A7N581</accession>
<organism>
    <name type="scientific">Vibrio campbellii (strain ATCC BAA-1116)</name>
    <dbReference type="NCBI Taxonomy" id="2902295"/>
    <lineage>
        <taxon>Bacteria</taxon>
        <taxon>Pseudomonadati</taxon>
        <taxon>Pseudomonadota</taxon>
        <taxon>Gammaproteobacteria</taxon>
        <taxon>Vibrionales</taxon>
        <taxon>Vibrionaceae</taxon>
        <taxon>Vibrio</taxon>
    </lineage>
</organism>
<feature type="chain" id="PRO_0000359089" description="Acetyl-coenzyme A carboxylase carboxyl transferase subunit beta 2">
    <location>
        <begin position="1"/>
        <end position="289"/>
    </location>
</feature>
<feature type="domain" description="CoA carboxyltransferase N-terminal" evidence="2">
    <location>
        <begin position="25"/>
        <end position="289"/>
    </location>
</feature>
<feature type="zinc finger region" description="C4-type" evidence="1">
    <location>
        <begin position="29"/>
        <end position="51"/>
    </location>
</feature>
<feature type="binding site" evidence="1">
    <location>
        <position position="29"/>
    </location>
    <ligand>
        <name>Zn(2+)</name>
        <dbReference type="ChEBI" id="CHEBI:29105"/>
    </ligand>
</feature>
<feature type="binding site" evidence="1">
    <location>
        <position position="32"/>
    </location>
    <ligand>
        <name>Zn(2+)</name>
        <dbReference type="ChEBI" id="CHEBI:29105"/>
    </ligand>
</feature>
<feature type="binding site" evidence="1">
    <location>
        <position position="48"/>
    </location>
    <ligand>
        <name>Zn(2+)</name>
        <dbReference type="ChEBI" id="CHEBI:29105"/>
    </ligand>
</feature>
<feature type="binding site" evidence="1">
    <location>
        <position position="51"/>
    </location>
    <ligand>
        <name>Zn(2+)</name>
        <dbReference type="ChEBI" id="CHEBI:29105"/>
    </ligand>
</feature>
<proteinExistence type="inferred from homology"/>
<dbReference type="EC" id="2.1.3.15" evidence="1"/>
<dbReference type="EMBL" id="CP000790">
    <property type="protein sequence ID" value="ABU73911.1"/>
    <property type="molecule type" value="Genomic_DNA"/>
</dbReference>
<dbReference type="RefSeq" id="WP_012129542.1">
    <property type="nucleotide sequence ID" value="NC_009784.1"/>
</dbReference>
<dbReference type="SMR" id="A7N581"/>
<dbReference type="KEGG" id="vha:VIBHAR_06018"/>
<dbReference type="PATRIC" id="fig|338187.25.peg.4288"/>
<dbReference type="UniPathway" id="UPA00655">
    <property type="reaction ID" value="UER00711"/>
</dbReference>
<dbReference type="Proteomes" id="UP000008152">
    <property type="component" value="Chromosome II"/>
</dbReference>
<dbReference type="GO" id="GO:0009329">
    <property type="term" value="C:acetate CoA-transferase complex"/>
    <property type="evidence" value="ECO:0007669"/>
    <property type="project" value="TreeGrafter"/>
</dbReference>
<dbReference type="GO" id="GO:0003989">
    <property type="term" value="F:acetyl-CoA carboxylase activity"/>
    <property type="evidence" value="ECO:0007669"/>
    <property type="project" value="InterPro"/>
</dbReference>
<dbReference type="GO" id="GO:0005524">
    <property type="term" value="F:ATP binding"/>
    <property type="evidence" value="ECO:0007669"/>
    <property type="project" value="UniProtKB-KW"/>
</dbReference>
<dbReference type="GO" id="GO:0016743">
    <property type="term" value="F:carboxyl- or carbamoyltransferase activity"/>
    <property type="evidence" value="ECO:0007669"/>
    <property type="project" value="UniProtKB-UniRule"/>
</dbReference>
<dbReference type="GO" id="GO:0008270">
    <property type="term" value="F:zinc ion binding"/>
    <property type="evidence" value="ECO:0007669"/>
    <property type="project" value="UniProtKB-UniRule"/>
</dbReference>
<dbReference type="GO" id="GO:0006633">
    <property type="term" value="P:fatty acid biosynthetic process"/>
    <property type="evidence" value="ECO:0007669"/>
    <property type="project" value="UniProtKB-KW"/>
</dbReference>
<dbReference type="GO" id="GO:2001295">
    <property type="term" value="P:malonyl-CoA biosynthetic process"/>
    <property type="evidence" value="ECO:0007669"/>
    <property type="project" value="UniProtKB-UniRule"/>
</dbReference>
<dbReference type="Gene3D" id="3.90.226.10">
    <property type="entry name" value="2-enoyl-CoA Hydratase, Chain A, domain 1"/>
    <property type="match status" value="1"/>
</dbReference>
<dbReference type="HAMAP" id="MF_01395">
    <property type="entry name" value="AcetylCoA_CT_beta"/>
    <property type="match status" value="1"/>
</dbReference>
<dbReference type="InterPro" id="IPR034733">
    <property type="entry name" value="AcCoA_carboxyl_beta"/>
</dbReference>
<dbReference type="InterPro" id="IPR000438">
    <property type="entry name" value="Acetyl_CoA_COase_Trfase_b_su"/>
</dbReference>
<dbReference type="InterPro" id="IPR029045">
    <property type="entry name" value="ClpP/crotonase-like_dom_sf"/>
</dbReference>
<dbReference type="InterPro" id="IPR011762">
    <property type="entry name" value="COA_CT_N"/>
</dbReference>
<dbReference type="InterPro" id="IPR041010">
    <property type="entry name" value="Znf-ACC"/>
</dbReference>
<dbReference type="NCBIfam" id="TIGR00515">
    <property type="entry name" value="accD"/>
    <property type="match status" value="1"/>
</dbReference>
<dbReference type="PANTHER" id="PTHR42995">
    <property type="entry name" value="ACETYL-COENZYME A CARBOXYLASE CARBOXYL TRANSFERASE SUBUNIT BETA, CHLOROPLASTIC"/>
    <property type="match status" value="1"/>
</dbReference>
<dbReference type="PANTHER" id="PTHR42995:SF5">
    <property type="entry name" value="ACETYL-COENZYME A CARBOXYLASE CARBOXYL TRANSFERASE SUBUNIT BETA, CHLOROPLASTIC"/>
    <property type="match status" value="1"/>
</dbReference>
<dbReference type="Pfam" id="PF01039">
    <property type="entry name" value="Carboxyl_trans"/>
    <property type="match status" value="1"/>
</dbReference>
<dbReference type="Pfam" id="PF17848">
    <property type="entry name" value="Zn_ribbon_ACC"/>
    <property type="match status" value="1"/>
</dbReference>
<dbReference type="PRINTS" id="PR01070">
    <property type="entry name" value="ACCCTRFRASEB"/>
</dbReference>
<dbReference type="SUPFAM" id="SSF52096">
    <property type="entry name" value="ClpP/crotonase"/>
    <property type="match status" value="1"/>
</dbReference>
<dbReference type="PROSITE" id="PS50980">
    <property type="entry name" value="COA_CT_NTER"/>
    <property type="match status" value="1"/>
</dbReference>
<name>ACCD2_VIBC1</name>
<comment type="function">
    <text evidence="1">Component of the acetyl coenzyme A carboxylase (ACC) complex. Biotin carboxylase (BC) catalyzes the carboxylation of biotin on its carrier protein (BCCP) and then the CO(2) group is transferred by the transcarboxylase to acetyl-CoA to form malonyl-CoA.</text>
</comment>
<comment type="catalytic activity">
    <reaction evidence="1">
        <text>N(6)-carboxybiotinyl-L-lysyl-[protein] + acetyl-CoA = N(6)-biotinyl-L-lysyl-[protein] + malonyl-CoA</text>
        <dbReference type="Rhea" id="RHEA:54728"/>
        <dbReference type="Rhea" id="RHEA-COMP:10505"/>
        <dbReference type="Rhea" id="RHEA-COMP:10506"/>
        <dbReference type="ChEBI" id="CHEBI:57288"/>
        <dbReference type="ChEBI" id="CHEBI:57384"/>
        <dbReference type="ChEBI" id="CHEBI:83144"/>
        <dbReference type="ChEBI" id="CHEBI:83145"/>
        <dbReference type="EC" id="2.1.3.15"/>
    </reaction>
</comment>
<comment type="cofactor">
    <cofactor evidence="1">
        <name>Zn(2+)</name>
        <dbReference type="ChEBI" id="CHEBI:29105"/>
    </cofactor>
    <text evidence="1">Binds 1 zinc ion per subunit.</text>
</comment>
<comment type="pathway">
    <text evidence="1">Lipid metabolism; malonyl-CoA biosynthesis; malonyl-CoA from acetyl-CoA: step 1/1.</text>
</comment>
<comment type="subunit">
    <text evidence="1">Acetyl-CoA carboxylase is a heterohexamer composed of biotin carboxyl carrier protein (AccB), biotin carboxylase (AccC) and two subunits each of ACCase subunit alpha (AccA) and ACCase subunit beta (AccD).</text>
</comment>
<comment type="subcellular location">
    <subcellularLocation>
        <location evidence="1">Cytoplasm</location>
    </subcellularLocation>
</comment>
<comment type="similarity">
    <text evidence="1">Belongs to the AccD/PCCB family.</text>
</comment>
<protein>
    <recommendedName>
        <fullName evidence="1">Acetyl-coenzyme A carboxylase carboxyl transferase subunit beta 2</fullName>
        <shortName evidence="1">ACCase subunit beta 2</shortName>
        <shortName evidence="1">Acetyl-CoA carboxylase carboxyltransferase subunit beta 2</shortName>
        <ecNumber evidence="1">2.1.3.15</ecNumber>
    </recommendedName>
</protein>
<gene>
    <name evidence="1" type="primary">accD2</name>
    <name type="ordered locus">VIBHAR_06018</name>
</gene>
<keyword id="KW-0067">ATP-binding</keyword>
<keyword id="KW-0963">Cytoplasm</keyword>
<keyword id="KW-0275">Fatty acid biosynthesis</keyword>
<keyword id="KW-0276">Fatty acid metabolism</keyword>
<keyword id="KW-0444">Lipid biosynthesis</keyword>
<keyword id="KW-0443">Lipid metabolism</keyword>
<keyword id="KW-0479">Metal-binding</keyword>
<keyword id="KW-0547">Nucleotide-binding</keyword>
<keyword id="KW-0808">Transferase</keyword>
<keyword id="KW-0862">Zinc</keyword>
<keyword id="KW-0863">Zinc-finger</keyword>